<dbReference type="EMBL" id="AF183910">
    <property type="protein sequence ID" value="AAF01036.1"/>
    <property type="molecule type" value="mRNA"/>
</dbReference>
<dbReference type="RefSeq" id="NP_072145.1">
    <property type="nucleotide sequence ID" value="NM_022623.4"/>
</dbReference>
<dbReference type="SMR" id="Q9QZH0"/>
<dbReference type="FunCoup" id="Q9QZH0">
    <property type="interactions" value="678"/>
</dbReference>
<dbReference type="STRING" id="10116.ENSRNOP00000023205"/>
<dbReference type="GlyCosmos" id="Q9QZH0">
    <property type="glycosylation" value="3 sites, No reported glycans"/>
</dbReference>
<dbReference type="GlyGen" id="Q9QZH0">
    <property type="glycosylation" value="3 sites"/>
</dbReference>
<dbReference type="PhosphoSitePlus" id="Q9QZH0"/>
<dbReference type="PaxDb" id="10116-ENSRNOP00000023205"/>
<dbReference type="Ensembl" id="ENSRNOT00000106139.1">
    <property type="protein sequence ID" value="ENSRNOP00000088712.1"/>
    <property type="gene ID" value="ENSRNOG00000063590.1"/>
</dbReference>
<dbReference type="GeneID" id="64558"/>
<dbReference type="KEGG" id="rno:64558"/>
<dbReference type="UCSC" id="RGD:71017">
    <property type="organism name" value="rat"/>
</dbReference>
<dbReference type="AGR" id="RGD:71017"/>
<dbReference type="CTD" id="8322"/>
<dbReference type="RGD" id="71017">
    <property type="gene designation" value="Fzd4"/>
</dbReference>
<dbReference type="eggNOG" id="KOG3577">
    <property type="taxonomic scope" value="Eukaryota"/>
</dbReference>
<dbReference type="GeneTree" id="ENSGT00940000157141"/>
<dbReference type="HOGENOM" id="CLU_007873_2_1_1"/>
<dbReference type="InParanoid" id="Q9QZH0"/>
<dbReference type="OMA" id="HWGEFRA"/>
<dbReference type="OrthoDB" id="5959102at2759"/>
<dbReference type="PhylomeDB" id="Q9QZH0"/>
<dbReference type="TreeFam" id="TF317907"/>
<dbReference type="Reactome" id="R-RNO-4086398">
    <property type="pathway name" value="Ca2+ pathway"/>
</dbReference>
<dbReference type="Reactome" id="R-RNO-4608870">
    <property type="pathway name" value="Asymmetric localization of PCP proteins"/>
</dbReference>
<dbReference type="Reactome" id="R-RNO-4641263">
    <property type="pathway name" value="Regulation of FZD by ubiquitination"/>
</dbReference>
<dbReference type="Reactome" id="R-RNO-5099900">
    <property type="pathway name" value="WNT5A-dependent internalization of FZD4"/>
</dbReference>
<dbReference type="Reactome" id="R-RNO-8856825">
    <property type="pathway name" value="Cargo recognition for clathrin-mediated endocytosis"/>
</dbReference>
<dbReference type="Reactome" id="R-RNO-8856828">
    <property type="pathway name" value="Clathrin-mediated endocytosis"/>
</dbReference>
<dbReference type="PRO" id="PR:Q9QZH0"/>
<dbReference type="Proteomes" id="UP000002494">
    <property type="component" value="Chromosome 1"/>
</dbReference>
<dbReference type="Bgee" id="ENSRNOG00000016848">
    <property type="expression patterns" value="Expressed in skeletal muscle tissue and 18 other cell types or tissues"/>
</dbReference>
<dbReference type="GO" id="GO:0009986">
    <property type="term" value="C:cell surface"/>
    <property type="evidence" value="ECO:0000266"/>
    <property type="project" value="RGD"/>
</dbReference>
<dbReference type="GO" id="GO:0005911">
    <property type="term" value="C:cell-cell junction"/>
    <property type="evidence" value="ECO:0000266"/>
    <property type="project" value="RGD"/>
</dbReference>
<dbReference type="GO" id="GO:0005929">
    <property type="term" value="C:cilium"/>
    <property type="evidence" value="ECO:0007669"/>
    <property type="project" value="Ensembl"/>
</dbReference>
<dbReference type="GO" id="GO:0030425">
    <property type="term" value="C:dendrite"/>
    <property type="evidence" value="ECO:0000266"/>
    <property type="project" value="RGD"/>
</dbReference>
<dbReference type="GO" id="GO:0098978">
    <property type="term" value="C:glutamatergic synapse"/>
    <property type="evidence" value="ECO:0000266"/>
    <property type="project" value="RGD"/>
</dbReference>
<dbReference type="GO" id="GO:0005654">
    <property type="term" value="C:nucleoplasm"/>
    <property type="evidence" value="ECO:0007669"/>
    <property type="project" value="Ensembl"/>
</dbReference>
<dbReference type="GO" id="GO:0005886">
    <property type="term" value="C:plasma membrane"/>
    <property type="evidence" value="ECO:0000250"/>
    <property type="project" value="UniProtKB"/>
</dbReference>
<dbReference type="GO" id="GO:0045202">
    <property type="term" value="C:synapse"/>
    <property type="evidence" value="ECO:0000266"/>
    <property type="project" value="RGD"/>
</dbReference>
<dbReference type="GO" id="GO:0001540">
    <property type="term" value="F:amyloid-beta binding"/>
    <property type="evidence" value="ECO:0000266"/>
    <property type="project" value="RGD"/>
</dbReference>
<dbReference type="GO" id="GO:0019955">
    <property type="term" value="F:cytokine binding"/>
    <property type="evidence" value="ECO:0000266"/>
    <property type="project" value="RGD"/>
</dbReference>
<dbReference type="GO" id="GO:0004896">
    <property type="term" value="F:cytokine receptor activity"/>
    <property type="evidence" value="ECO:0000266"/>
    <property type="project" value="RGD"/>
</dbReference>
<dbReference type="GO" id="GO:0004930">
    <property type="term" value="F:G protein-coupled receptor activity"/>
    <property type="evidence" value="ECO:0007669"/>
    <property type="project" value="UniProtKB-KW"/>
</dbReference>
<dbReference type="GO" id="GO:0030165">
    <property type="term" value="F:PDZ domain binding"/>
    <property type="evidence" value="ECO:0000266"/>
    <property type="project" value="RGD"/>
</dbReference>
<dbReference type="GO" id="GO:0046982">
    <property type="term" value="F:protein heterodimerization activity"/>
    <property type="evidence" value="ECO:0000266"/>
    <property type="project" value="RGD"/>
</dbReference>
<dbReference type="GO" id="GO:0042803">
    <property type="term" value="F:protein homodimerization activity"/>
    <property type="evidence" value="ECO:0000266"/>
    <property type="project" value="RGD"/>
</dbReference>
<dbReference type="GO" id="GO:0044877">
    <property type="term" value="F:protein-containing complex binding"/>
    <property type="evidence" value="ECO:0000266"/>
    <property type="project" value="RGD"/>
</dbReference>
<dbReference type="GO" id="GO:0038023">
    <property type="term" value="F:signaling receptor activity"/>
    <property type="evidence" value="ECO:0000316"/>
    <property type="project" value="ARUK-UCL"/>
</dbReference>
<dbReference type="GO" id="GO:0031625">
    <property type="term" value="F:ubiquitin protein ligase binding"/>
    <property type="evidence" value="ECO:0000266"/>
    <property type="project" value="RGD"/>
</dbReference>
<dbReference type="GO" id="GO:0042813">
    <property type="term" value="F:Wnt receptor activity"/>
    <property type="evidence" value="ECO:0000266"/>
    <property type="project" value="RGD"/>
</dbReference>
<dbReference type="GO" id="GO:0017147">
    <property type="term" value="F:Wnt-protein binding"/>
    <property type="evidence" value="ECO:0000353"/>
    <property type="project" value="RGD"/>
</dbReference>
<dbReference type="GO" id="GO:0001525">
    <property type="term" value="P:angiogenesis"/>
    <property type="evidence" value="ECO:0000266"/>
    <property type="project" value="RGD"/>
</dbReference>
<dbReference type="GO" id="GO:0001568">
    <property type="term" value="P:blood vessel development"/>
    <property type="evidence" value="ECO:0000266"/>
    <property type="project" value="RGD"/>
</dbReference>
<dbReference type="GO" id="GO:0060070">
    <property type="term" value="P:canonical Wnt signaling pathway"/>
    <property type="evidence" value="ECO:0000266"/>
    <property type="project" value="RGD"/>
</dbReference>
<dbReference type="GO" id="GO:0008283">
    <property type="term" value="P:cell population proliferation"/>
    <property type="evidence" value="ECO:0000266"/>
    <property type="project" value="RGD"/>
</dbReference>
<dbReference type="GO" id="GO:1990830">
    <property type="term" value="P:cellular response to leukemia inhibitory factor"/>
    <property type="evidence" value="ECO:0000266"/>
    <property type="project" value="RGD"/>
</dbReference>
<dbReference type="GO" id="GO:0061301">
    <property type="term" value="P:cerebellum vasculature morphogenesis"/>
    <property type="evidence" value="ECO:0000266"/>
    <property type="project" value="RGD"/>
</dbReference>
<dbReference type="GO" id="GO:0045446">
    <property type="term" value="P:endothelial cell differentiation"/>
    <property type="evidence" value="ECO:0000266"/>
    <property type="project" value="RGD"/>
</dbReference>
<dbReference type="GO" id="GO:0060856">
    <property type="term" value="P:establishment of blood-brain barrier"/>
    <property type="evidence" value="ECO:0000266"/>
    <property type="project" value="RGD"/>
</dbReference>
<dbReference type="GO" id="GO:0035426">
    <property type="term" value="P:extracellular matrix-cell signaling"/>
    <property type="evidence" value="ECO:0000266"/>
    <property type="project" value="RGD"/>
</dbReference>
<dbReference type="GO" id="GO:0031987">
    <property type="term" value="P:locomotion involved in locomotory behavior"/>
    <property type="evidence" value="ECO:0000266"/>
    <property type="project" value="RGD"/>
</dbReference>
<dbReference type="GO" id="GO:0001553">
    <property type="term" value="P:luteinization"/>
    <property type="evidence" value="ECO:0000266"/>
    <property type="project" value="RGD"/>
</dbReference>
<dbReference type="GO" id="GO:0010812">
    <property type="term" value="P:negative regulation of cell-substrate adhesion"/>
    <property type="evidence" value="ECO:0000266"/>
    <property type="project" value="RGD"/>
</dbReference>
<dbReference type="GO" id="GO:0035567">
    <property type="term" value="P:non-canonical Wnt signaling pathway"/>
    <property type="evidence" value="ECO:0000318"/>
    <property type="project" value="GO_Central"/>
</dbReference>
<dbReference type="GO" id="GO:0110135">
    <property type="term" value="P:Norrin signaling pathway"/>
    <property type="evidence" value="ECO:0000266"/>
    <property type="project" value="RGD"/>
</dbReference>
<dbReference type="GO" id="GO:0030335">
    <property type="term" value="P:positive regulation of cell migration"/>
    <property type="evidence" value="ECO:0000266"/>
    <property type="project" value="RGD"/>
</dbReference>
<dbReference type="GO" id="GO:0050775">
    <property type="term" value="P:positive regulation of dendrite morphogenesis"/>
    <property type="evidence" value="ECO:0000315"/>
    <property type="project" value="RGD"/>
</dbReference>
<dbReference type="GO" id="GO:0045893">
    <property type="term" value="P:positive regulation of DNA-templated transcription"/>
    <property type="evidence" value="ECO:0000266"/>
    <property type="project" value="RGD"/>
</dbReference>
<dbReference type="GO" id="GO:0150012">
    <property type="term" value="P:positive regulation of neuron projection arborization"/>
    <property type="evidence" value="ECO:0000316"/>
    <property type="project" value="ARUK-UCL"/>
</dbReference>
<dbReference type="GO" id="GO:0045944">
    <property type="term" value="P:positive regulation of transcription by RNA polymerase II"/>
    <property type="evidence" value="ECO:0000266"/>
    <property type="project" value="RGD"/>
</dbReference>
<dbReference type="GO" id="GO:0030177">
    <property type="term" value="P:positive regulation of Wnt signaling pathway"/>
    <property type="evidence" value="ECO:0000266"/>
    <property type="project" value="RGD"/>
</dbReference>
<dbReference type="GO" id="GO:0042701">
    <property type="term" value="P:progesterone secretion"/>
    <property type="evidence" value="ECO:0000266"/>
    <property type="project" value="RGD"/>
</dbReference>
<dbReference type="GO" id="GO:0030947">
    <property type="term" value="P:regulation of vascular endothelial growth factor receptor signaling pathway"/>
    <property type="evidence" value="ECO:0000266"/>
    <property type="project" value="RGD"/>
</dbReference>
<dbReference type="GO" id="GO:0001666">
    <property type="term" value="P:response to hypoxia"/>
    <property type="evidence" value="ECO:0000266"/>
    <property type="project" value="RGD"/>
</dbReference>
<dbReference type="GO" id="GO:0061298">
    <property type="term" value="P:retina vasculature development in camera-type eye"/>
    <property type="evidence" value="ECO:0000266"/>
    <property type="project" value="RGD"/>
</dbReference>
<dbReference type="GO" id="GO:0061299">
    <property type="term" value="P:retina vasculature morphogenesis in camera-type eye"/>
    <property type="evidence" value="ECO:0000266"/>
    <property type="project" value="RGD"/>
</dbReference>
<dbReference type="GO" id="GO:0061304">
    <property type="term" value="P:retinal blood vessel morphogenesis"/>
    <property type="evidence" value="ECO:0000266"/>
    <property type="project" value="RGD"/>
</dbReference>
<dbReference type="GO" id="GO:0007605">
    <property type="term" value="P:sensory perception of sound"/>
    <property type="evidence" value="ECO:0000266"/>
    <property type="project" value="RGD"/>
</dbReference>
<dbReference type="GO" id="GO:0034446">
    <property type="term" value="P:substrate adhesion-dependent cell spreading"/>
    <property type="evidence" value="ECO:0000266"/>
    <property type="project" value="RGD"/>
</dbReference>
<dbReference type="GO" id="GO:0001570">
    <property type="term" value="P:vasculogenesis"/>
    <property type="evidence" value="ECO:0000266"/>
    <property type="project" value="RGD"/>
</dbReference>
<dbReference type="GO" id="GO:0016055">
    <property type="term" value="P:Wnt signaling pathway"/>
    <property type="evidence" value="ECO:0000316"/>
    <property type="project" value="ARUK-UCL"/>
</dbReference>
<dbReference type="GO" id="GO:0007223">
    <property type="term" value="P:Wnt signaling pathway, calcium modulating pathway"/>
    <property type="evidence" value="ECO:0000266"/>
    <property type="project" value="RGD"/>
</dbReference>
<dbReference type="CDD" id="cd15038">
    <property type="entry name" value="7tmF_FZD4"/>
    <property type="match status" value="1"/>
</dbReference>
<dbReference type="CDD" id="cd07448">
    <property type="entry name" value="CRD_FZ4"/>
    <property type="match status" value="1"/>
</dbReference>
<dbReference type="FunFam" id="1.20.1070.10:FF:000020">
    <property type="entry name" value="Frizzled class receptor 10"/>
    <property type="match status" value="1"/>
</dbReference>
<dbReference type="FunFam" id="1.10.2000.10:FF:000008">
    <property type="entry name" value="Frizzled receptor 4"/>
    <property type="match status" value="1"/>
</dbReference>
<dbReference type="Gene3D" id="1.10.2000.10">
    <property type="entry name" value="Frizzled cysteine-rich domain"/>
    <property type="match status" value="1"/>
</dbReference>
<dbReference type="Gene3D" id="1.20.1070.10">
    <property type="entry name" value="Rhodopsin 7-helix transmembrane proteins"/>
    <property type="match status" value="1"/>
</dbReference>
<dbReference type="InterPro" id="IPR015526">
    <property type="entry name" value="Frizzled/SFRP"/>
</dbReference>
<dbReference type="InterPro" id="IPR000539">
    <property type="entry name" value="Frizzled/Smoothened_7TM"/>
</dbReference>
<dbReference type="InterPro" id="IPR020067">
    <property type="entry name" value="Frizzled_dom"/>
</dbReference>
<dbReference type="InterPro" id="IPR036790">
    <property type="entry name" value="Frizzled_dom_sf"/>
</dbReference>
<dbReference type="InterPro" id="IPR041765">
    <property type="entry name" value="FZ4_CRD"/>
</dbReference>
<dbReference type="InterPro" id="IPR026551">
    <property type="entry name" value="FZD4_7TM"/>
</dbReference>
<dbReference type="InterPro" id="IPR017981">
    <property type="entry name" value="GPCR_2-like_7TM"/>
</dbReference>
<dbReference type="PANTHER" id="PTHR11309">
    <property type="entry name" value="FRIZZLED"/>
    <property type="match status" value="1"/>
</dbReference>
<dbReference type="PANTHER" id="PTHR11309:SF23">
    <property type="entry name" value="FRIZZLED-4"/>
    <property type="match status" value="1"/>
</dbReference>
<dbReference type="Pfam" id="PF01534">
    <property type="entry name" value="Frizzled"/>
    <property type="match status" value="1"/>
</dbReference>
<dbReference type="Pfam" id="PF01392">
    <property type="entry name" value="Fz"/>
    <property type="match status" value="1"/>
</dbReference>
<dbReference type="PRINTS" id="PR00489">
    <property type="entry name" value="FRIZZLED"/>
</dbReference>
<dbReference type="SMART" id="SM00063">
    <property type="entry name" value="FRI"/>
    <property type="match status" value="1"/>
</dbReference>
<dbReference type="SMART" id="SM01330">
    <property type="entry name" value="Frizzled"/>
    <property type="match status" value="1"/>
</dbReference>
<dbReference type="SUPFAM" id="SSF63501">
    <property type="entry name" value="Frizzled cysteine-rich domain"/>
    <property type="match status" value="1"/>
</dbReference>
<dbReference type="PROSITE" id="PS50038">
    <property type="entry name" value="FZ"/>
    <property type="match status" value="1"/>
</dbReference>
<dbReference type="PROSITE" id="PS50261">
    <property type="entry name" value="G_PROTEIN_RECEP_F2_4"/>
    <property type="match status" value="1"/>
</dbReference>
<organism>
    <name type="scientific">Rattus norvegicus</name>
    <name type="common">Rat</name>
    <dbReference type="NCBI Taxonomy" id="10116"/>
    <lineage>
        <taxon>Eukaryota</taxon>
        <taxon>Metazoa</taxon>
        <taxon>Chordata</taxon>
        <taxon>Craniata</taxon>
        <taxon>Vertebrata</taxon>
        <taxon>Euteleostomi</taxon>
        <taxon>Mammalia</taxon>
        <taxon>Eutheria</taxon>
        <taxon>Euarchontoglires</taxon>
        <taxon>Glires</taxon>
        <taxon>Rodentia</taxon>
        <taxon>Myomorpha</taxon>
        <taxon>Muroidea</taxon>
        <taxon>Muridae</taxon>
        <taxon>Murinae</taxon>
        <taxon>Rattus</taxon>
    </lineage>
</organism>
<gene>
    <name type="primary">Fzd4</name>
</gene>
<keyword id="KW-1003">Cell membrane</keyword>
<keyword id="KW-0217">Developmental protein</keyword>
<keyword id="KW-1015">Disulfide bond</keyword>
<keyword id="KW-0297">G-protein coupled receptor</keyword>
<keyword id="KW-0325">Glycoprotein</keyword>
<keyword id="KW-0472">Membrane</keyword>
<keyword id="KW-0675">Receptor</keyword>
<keyword id="KW-1185">Reference proteome</keyword>
<keyword id="KW-0732">Signal</keyword>
<keyword id="KW-0807">Transducer</keyword>
<keyword id="KW-0812">Transmembrane</keyword>
<keyword id="KW-1133">Transmembrane helix</keyword>
<keyword id="KW-0832">Ubl conjugation</keyword>
<keyword id="KW-0879">Wnt signaling pathway</keyword>
<name>FZD4_RAT</name>
<comment type="function">
    <text evidence="2 3">Receptor for Wnt proteins (By similarity). Most of frizzled receptors are coupled to the beta-catenin (CTNNB1) canonical signaling pathway, which leads to the activation of disheveled proteins, inhibition of GSK-3 kinase, nuclear accumulation of beta-catenin (CTNNB1) and activation of Wnt target genes (By similarity). Plays a critical role in retinal vascularization by acting as a receptor for Wnt proteins and norrin (NDP) (By similarity). In retina, it can be both activated by Wnt protein-binding, but also by a Wnt-independent signaling via binding of norrin (NDP), promoting in both cases beta-catenin (CTNNB1) accumulation and stimulation of LEF/TCF-mediated transcriptional programs (By similarity). A second signaling pathway involving PKC and calcium fluxes has been seen for some family members, but it is not yet clear if it represents a distinct pathway or if it can be integrated in the canonical pathway, as PKC seems to be required for Wnt-mediated inactivation of GSK-3 kinase (By similarity). Both pathways seem to involve interactions with G-proteins (By similarity). May be involved in transduction and intercellular transmission of polarity information during tissue morphogenesis and/or in differentiated tissues (By similarity).</text>
</comment>
<comment type="subunit">
    <text evidence="2 3">Interacts with MAGI3 and NDP. Component of a complex, at least composed of TSPAN12, FZD4 and norrin (NDP). Interacts (via FZ domain) with TSKU; TSKU competes with WNT2B for binding to FZD4, inhibiting Wnt signaling and repressing peripheral eye development. Interacts with glypican GPC3.</text>
</comment>
<comment type="subcellular location">
    <subcellularLocation>
        <location evidence="3">Cell membrane</location>
        <topology evidence="4">Multi-pass membrane protein</topology>
    </subcellularLocation>
</comment>
<comment type="domain">
    <text evidence="1">Lys-Thr-X-X-X-Trp motif interacts with the PDZ domain of Dvl (Disheveled) family members and is involved in the activation of the Wnt/beta-catenin signaling pathway.</text>
</comment>
<comment type="domain">
    <text evidence="1">The FZ domain is involved in binding with Wnt ligands.</text>
</comment>
<comment type="PTM">
    <text evidence="1">Ubiquitinated by ZNRF3, leading to its degradation by the proteasome.</text>
</comment>
<comment type="similarity">
    <text evidence="6">Belongs to the G-protein coupled receptor Fz/Smo family.</text>
</comment>
<protein>
    <recommendedName>
        <fullName>Frizzled-4</fullName>
        <shortName>Fz-4</shortName>
        <shortName>rFz4</shortName>
    </recommendedName>
    <cdAntigenName>CD344</cdAntigenName>
</protein>
<feature type="signal peptide" evidence="4">
    <location>
        <begin position="1"/>
        <end position="37"/>
    </location>
</feature>
<feature type="chain" id="PRO_0000012987" description="Frizzled-4">
    <location>
        <begin position="38"/>
        <end position="538"/>
    </location>
</feature>
<feature type="topological domain" description="Extracellular" evidence="3">
    <location>
        <begin position="38"/>
        <end position="213"/>
    </location>
</feature>
<feature type="transmembrane region" description="Helical; Name=1" evidence="3">
    <location>
        <begin position="214"/>
        <end position="244"/>
    </location>
</feature>
<feature type="topological domain" description="Cytoplasmic" evidence="3">
    <location>
        <begin position="245"/>
        <end position="250"/>
    </location>
</feature>
<feature type="transmembrane region" description="Helical; Name=2" evidence="3">
    <location>
        <begin position="251"/>
        <end position="276"/>
    </location>
</feature>
<feature type="topological domain" description="Extracellular" evidence="3">
    <location>
        <begin position="277"/>
        <end position="300"/>
    </location>
</feature>
<feature type="transmembrane region" description="Helical; Name=3" evidence="3">
    <location>
        <begin position="301"/>
        <end position="334"/>
    </location>
</feature>
<feature type="topological domain" description="Cytoplasmic" evidence="3">
    <location>
        <begin position="335"/>
        <end position="337"/>
    </location>
</feature>
<feature type="transmembrane region" description="Helical; Name=4" evidence="3">
    <location>
        <begin position="338"/>
        <end position="366"/>
    </location>
</feature>
<feature type="topological domain" description="Extracellular" evidence="3">
    <location>
        <begin position="367"/>
        <end position="384"/>
    </location>
</feature>
<feature type="transmembrane region" description="Helical; Name=5" evidence="3">
    <location>
        <begin position="385"/>
        <end position="419"/>
    </location>
</feature>
<feature type="topological domain" description="Cytoplasmic" evidence="3">
    <location>
        <begin position="420"/>
        <end position="432"/>
    </location>
</feature>
<feature type="transmembrane region" description="Helical; Name=6" evidence="3">
    <location>
        <begin position="433"/>
        <end position="461"/>
    </location>
</feature>
<feature type="topological domain" description="Extracellular" evidence="3">
    <location>
        <begin position="462"/>
        <end position="474"/>
    </location>
</feature>
<feature type="transmembrane region" description="Helical; Name=7" evidence="3">
    <location>
        <begin position="475"/>
        <end position="496"/>
    </location>
</feature>
<feature type="topological domain" description="Cytoplasmic" evidence="3">
    <location>
        <begin position="497"/>
        <end position="538"/>
    </location>
</feature>
<feature type="domain" description="FZ" evidence="5">
    <location>
        <begin position="41"/>
        <end position="162"/>
    </location>
</feature>
<feature type="short sequence motif" description="Lys-Thr-X-X-X-Trp motif, mediates interaction with the PDZ domain of Dvl family members" evidence="1">
    <location>
        <begin position="500"/>
        <end position="505"/>
    </location>
</feature>
<feature type="short sequence motif" description="PDZ-binding">
    <location>
        <begin position="536"/>
        <end position="538"/>
    </location>
</feature>
<feature type="glycosylation site" description="N-linked (GlcNAc...) asparagine" evidence="4">
    <location>
        <position position="60"/>
    </location>
</feature>
<feature type="glycosylation site" description="N-linked (GlcNAc...) asparagine" evidence="4">
    <location>
        <position position="145"/>
    </location>
</feature>
<feature type="glycosylation site" description="N-linked (GlcNAc...) asparagine" evidence="4">
    <location>
        <position position="382"/>
    </location>
</feature>
<feature type="disulfide bond" evidence="5">
    <location>
        <begin position="46"/>
        <end position="107"/>
    </location>
</feature>
<feature type="disulfide bond" evidence="5">
    <location>
        <begin position="54"/>
        <end position="100"/>
    </location>
</feature>
<feature type="disulfide bond" evidence="5">
    <location>
        <begin position="91"/>
        <end position="129"/>
    </location>
</feature>
<feature type="disulfide bond" evidence="5">
    <location>
        <begin position="118"/>
        <end position="159"/>
    </location>
</feature>
<feature type="disulfide bond" evidence="5">
    <location>
        <begin position="122"/>
        <end position="146"/>
    </location>
</feature>
<feature type="disulfide bond" evidence="3">
    <location>
        <begin position="182"/>
        <end position="201"/>
    </location>
</feature>
<feature type="disulfide bond" evidence="3">
    <location>
        <begin position="205"/>
        <end position="283"/>
    </location>
</feature>
<feature type="disulfide bond" evidence="3">
    <location>
        <begin position="303"/>
        <end position="378"/>
    </location>
</feature>
<sequence>MAWQGTGPSVRGMPGGVRLRLGLLLLQLLLLQRPALGFGDEEERRCDPIRIAMCQNLGYNVTKMPNLVGHELQTDAELQLTTFTPLIQYGCSSQLQFFLCSVYVPMCTEKINIPIGPCGGMCLSVKRRCEPVLKEFGFAWPDSLNCSKFPPQNDHNHMCMEGPGDEEVPLPHKTPIQPGEECHSVGTNSDQYIWVKRSLNCVLKCGYDAGLYSRSAKEFTDIWMAVWASLCFISTTFTVLTFLIDSSRFSYPERPIIFLSMCYNIYSIAYIVRLTVGRERISCDFEEAAEPVLIQEGLKNTGCAIIFLLMYFFGMASSIWWVILTLTWFLAAGLKWGHEAIEMHSSYFHIAAWAIPAVKTIVILIMRLVDADELTGLCYVGNQSLDALTGFVVAPLFTYLVIGTLFIAAGLVALFKIRSNLQKDGTKTDKLERLMVKIGVFSVLYTVPATCVIACYFYEISNWALFRYSADDSNMAVEMLKIFMSLLVGITSGMWIWSAKTLHTWQKCSNRLVNSGKVKREKRGNGWVKPGKGNETVV</sequence>
<proteinExistence type="evidence at transcript level"/>
<evidence type="ECO:0000250" key="1"/>
<evidence type="ECO:0000250" key="2">
    <source>
        <dbReference type="UniProtKB" id="Q61088"/>
    </source>
</evidence>
<evidence type="ECO:0000250" key="3">
    <source>
        <dbReference type="UniProtKB" id="Q9ULV1"/>
    </source>
</evidence>
<evidence type="ECO:0000255" key="4"/>
<evidence type="ECO:0000255" key="5">
    <source>
        <dbReference type="PROSITE-ProRule" id="PRU00090"/>
    </source>
</evidence>
<evidence type="ECO:0000305" key="6"/>
<accession>Q9QZH0</accession>
<reference key="1">
    <citation type="submission" date="1999-09" db="EMBL/GenBank/DDBJ databases">
        <title>Expression of a putative seven-pass transmembrane frizzled receptor in the Corpus Luteum (CL) of the rat during pregnancy and involution.</title>
        <authorList>
            <person name="Walther P.R."/>
            <person name="Lacher M.D."/>
            <person name="Saurer S."/>
            <person name="Friis R.R."/>
        </authorList>
    </citation>
    <scope>NUCLEOTIDE SEQUENCE [MRNA]</scope>
    <source>
        <tissue>Corpus luteum</tissue>
    </source>
</reference>